<proteinExistence type="evidence at protein level"/>
<dbReference type="EC" id="2.3.2.27"/>
<dbReference type="EMBL" id="AB025621">
    <property type="protein sequence ID" value="BAB09756.1"/>
    <property type="status" value="ALT_SEQ"/>
    <property type="molecule type" value="Genomic_DNA"/>
</dbReference>
<dbReference type="EMBL" id="CP002688">
    <property type="protein sequence ID" value="AED96082.1"/>
    <property type="molecule type" value="Genomic_DNA"/>
</dbReference>
<dbReference type="EMBL" id="AY062101">
    <property type="protein sequence ID" value="AAL32977.1"/>
    <property type="molecule type" value="mRNA"/>
</dbReference>
<dbReference type="RefSeq" id="NP_568760.1">
    <molecule id="Q8W4Q5-1"/>
    <property type="nucleotide sequence ID" value="NM_124524.2"/>
</dbReference>
<dbReference type="SMR" id="Q8W4Q5"/>
<dbReference type="BioGRID" id="20464">
    <property type="interactions" value="3"/>
</dbReference>
<dbReference type="FunCoup" id="Q8W4Q5">
    <property type="interactions" value="876"/>
</dbReference>
<dbReference type="STRING" id="3702.Q8W4Q5"/>
<dbReference type="PaxDb" id="3702-AT5G51450.2"/>
<dbReference type="ProteomicsDB" id="237005">
    <molecule id="Q8W4Q5-1"/>
</dbReference>
<dbReference type="EnsemblPlants" id="AT5G51450.1">
    <molecule id="Q8W4Q5-1"/>
    <property type="protein sequence ID" value="AT5G51450.1"/>
    <property type="gene ID" value="AT5G51450"/>
</dbReference>
<dbReference type="GeneID" id="835219"/>
<dbReference type="Gramene" id="AT5G51450.1">
    <molecule id="Q8W4Q5-1"/>
    <property type="protein sequence ID" value="AT5G51450.1"/>
    <property type="gene ID" value="AT5G51450"/>
</dbReference>
<dbReference type="KEGG" id="ath:AT5G51450"/>
<dbReference type="Araport" id="AT5G51450"/>
<dbReference type="TAIR" id="AT5G51450">
    <property type="gene designation" value="RIN3"/>
</dbReference>
<dbReference type="eggNOG" id="KOG0802">
    <property type="taxonomic scope" value="Eukaryota"/>
</dbReference>
<dbReference type="HOGENOM" id="CLU_029305_1_0_1"/>
<dbReference type="InParanoid" id="Q8W4Q5"/>
<dbReference type="OMA" id="ESDPWRN"/>
<dbReference type="PhylomeDB" id="Q8W4Q5"/>
<dbReference type="UniPathway" id="UPA00143"/>
<dbReference type="PRO" id="PR:Q8W4Q5"/>
<dbReference type="Proteomes" id="UP000006548">
    <property type="component" value="Chromosome 5"/>
</dbReference>
<dbReference type="ExpressionAtlas" id="Q8W4Q5">
    <property type="expression patterns" value="baseline and differential"/>
</dbReference>
<dbReference type="GO" id="GO:0005886">
    <property type="term" value="C:plasma membrane"/>
    <property type="evidence" value="ECO:0000304"/>
    <property type="project" value="UniProtKB"/>
</dbReference>
<dbReference type="GO" id="GO:0016740">
    <property type="term" value="F:transferase activity"/>
    <property type="evidence" value="ECO:0007669"/>
    <property type="project" value="UniProtKB-KW"/>
</dbReference>
<dbReference type="GO" id="GO:0043130">
    <property type="term" value="F:ubiquitin binding"/>
    <property type="evidence" value="ECO:0007669"/>
    <property type="project" value="InterPro"/>
</dbReference>
<dbReference type="GO" id="GO:0008270">
    <property type="term" value="F:zinc ion binding"/>
    <property type="evidence" value="ECO:0007669"/>
    <property type="project" value="UniProtKB-KW"/>
</dbReference>
<dbReference type="GO" id="GO:0009626">
    <property type="term" value="P:plant-type hypersensitive response"/>
    <property type="evidence" value="ECO:0007669"/>
    <property type="project" value="UniProtKB-KW"/>
</dbReference>
<dbReference type="GO" id="GO:0016567">
    <property type="term" value="P:protein ubiquitination"/>
    <property type="evidence" value="ECO:0007669"/>
    <property type="project" value="UniProtKB-UniPathway"/>
</dbReference>
<dbReference type="CDD" id="cd14422">
    <property type="entry name" value="CUE_RIN3_plant"/>
    <property type="match status" value="1"/>
</dbReference>
<dbReference type="CDD" id="cd16455">
    <property type="entry name" value="RING-H2_AMFR"/>
    <property type="match status" value="1"/>
</dbReference>
<dbReference type="FunFam" id="1.10.8.10:FF:000054">
    <property type="entry name" value="E3 ubiquitin protein ligase RIN2"/>
    <property type="match status" value="1"/>
</dbReference>
<dbReference type="FunFam" id="3.30.40.10:FF:000259">
    <property type="entry name" value="E3 ubiquitin protein ligase RIN2"/>
    <property type="match status" value="1"/>
</dbReference>
<dbReference type="Gene3D" id="1.10.8.10">
    <property type="entry name" value="DNA helicase RuvA subunit, C-terminal domain"/>
    <property type="match status" value="1"/>
</dbReference>
<dbReference type="Gene3D" id="3.30.40.10">
    <property type="entry name" value="Zinc/RING finger domain, C3HC4 (zinc finger)"/>
    <property type="match status" value="1"/>
</dbReference>
<dbReference type="InterPro" id="IPR003892">
    <property type="entry name" value="CUE"/>
</dbReference>
<dbReference type="InterPro" id="IPR035667">
    <property type="entry name" value="RIN3_plant_CUE"/>
</dbReference>
<dbReference type="InterPro" id="IPR001841">
    <property type="entry name" value="Znf_RING"/>
</dbReference>
<dbReference type="InterPro" id="IPR013083">
    <property type="entry name" value="Znf_RING/FYVE/PHD"/>
</dbReference>
<dbReference type="PANTHER" id="PTHR15067">
    <property type="entry name" value="E3 UBIQUITIN-PROTEIN LIGASE RNF8"/>
    <property type="match status" value="1"/>
</dbReference>
<dbReference type="PANTHER" id="PTHR15067:SF4">
    <property type="entry name" value="E3 UBIQUITIN-PROTEIN LIGASE RNF8"/>
    <property type="match status" value="1"/>
</dbReference>
<dbReference type="Pfam" id="PF02845">
    <property type="entry name" value="CUE"/>
    <property type="match status" value="1"/>
</dbReference>
<dbReference type="Pfam" id="PF13639">
    <property type="entry name" value="zf-RING_2"/>
    <property type="match status" value="1"/>
</dbReference>
<dbReference type="SMART" id="SM00546">
    <property type="entry name" value="CUE"/>
    <property type="match status" value="1"/>
</dbReference>
<dbReference type="SMART" id="SM00184">
    <property type="entry name" value="RING"/>
    <property type="match status" value="1"/>
</dbReference>
<dbReference type="SUPFAM" id="SSF88633">
    <property type="entry name" value="Positive stranded ssRNA viruses"/>
    <property type="match status" value="1"/>
</dbReference>
<dbReference type="SUPFAM" id="SSF57850">
    <property type="entry name" value="RING/U-box"/>
    <property type="match status" value="1"/>
</dbReference>
<dbReference type="PROSITE" id="PS51140">
    <property type="entry name" value="CUE"/>
    <property type="match status" value="1"/>
</dbReference>
<dbReference type="PROSITE" id="PS50089">
    <property type="entry name" value="ZF_RING_2"/>
    <property type="match status" value="1"/>
</dbReference>
<comment type="function">
    <text evidence="4">E3 ubiquitin protein ligase that acts as a positive regulator of RPM1- and RPS2-dependent hypersensitive response (HR), in association with RIN2. Probably not required for RPM1 degradation during HR.</text>
</comment>
<comment type="catalytic activity">
    <reaction>
        <text>S-ubiquitinyl-[E2 ubiquitin-conjugating enzyme]-L-cysteine + [acceptor protein]-L-lysine = [E2 ubiquitin-conjugating enzyme]-L-cysteine + N(6)-ubiquitinyl-[acceptor protein]-L-lysine.</text>
        <dbReference type="EC" id="2.3.2.27"/>
    </reaction>
</comment>
<comment type="pathway">
    <text>Protein modification; protein ubiquitination.</text>
</comment>
<comment type="subunit">
    <text evidence="4">Interacts (via C-terminus) with RPM1 (via N-terminus).</text>
</comment>
<comment type="subcellular location">
    <subcellularLocation>
        <location evidence="4">Membrane</location>
        <topology evidence="4">Multi-pass membrane protein</topology>
    </subcellularLocation>
</comment>
<comment type="alternative products">
    <event type="alternative splicing"/>
    <isoform>
        <id>Q8W4Q5-1</id>
        <name>1</name>
        <sequence type="displayed"/>
    </isoform>
    <text>A number of isoforms are produced. According to EST sequences.</text>
</comment>
<comment type="induction">
    <text evidence="4">Repressed upon infection with the P.syringae avirulent DC3000 strain containing avrRpm1 (at protein level).</text>
</comment>
<comment type="disruption phenotype">
    <text evidence="4">No visible phenotype.</text>
</comment>
<comment type="sequence caution" evidence="5">
    <conflict type="erroneous gene model prediction">
        <sequence resource="EMBL-CDS" id="BAB09756"/>
    </conflict>
</comment>
<organism>
    <name type="scientific">Arabidopsis thaliana</name>
    <name type="common">Mouse-ear cress</name>
    <dbReference type="NCBI Taxonomy" id="3702"/>
    <lineage>
        <taxon>Eukaryota</taxon>
        <taxon>Viridiplantae</taxon>
        <taxon>Streptophyta</taxon>
        <taxon>Embryophyta</taxon>
        <taxon>Tracheophyta</taxon>
        <taxon>Spermatophyta</taxon>
        <taxon>Magnoliopsida</taxon>
        <taxon>eudicotyledons</taxon>
        <taxon>Gunneridae</taxon>
        <taxon>Pentapetalae</taxon>
        <taxon>rosids</taxon>
        <taxon>malvids</taxon>
        <taxon>Brassicales</taxon>
        <taxon>Brassicaceae</taxon>
        <taxon>Camelineae</taxon>
        <taxon>Arabidopsis</taxon>
    </lineage>
</organism>
<keyword id="KW-0025">Alternative splicing</keyword>
<keyword id="KW-0381">Hypersensitive response</keyword>
<keyword id="KW-0472">Membrane</keyword>
<keyword id="KW-0479">Metal-binding</keyword>
<keyword id="KW-0611">Plant defense</keyword>
<keyword id="KW-1185">Reference proteome</keyword>
<keyword id="KW-0808">Transferase</keyword>
<keyword id="KW-0812">Transmembrane</keyword>
<keyword id="KW-1133">Transmembrane helix</keyword>
<keyword id="KW-0833">Ubl conjugation pathway</keyword>
<keyword id="KW-0862">Zinc</keyword>
<keyword id="KW-0863">Zinc-finger</keyword>
<reference key="1">
    <citation type="submission" date="1999-04" db="EMBL/GenBank/DDBJ databases">
        <title>Structural analysis of Arabidopsis thaliana chromosome 5. XI.</title>
        <authorList>
            <person name="Kaneko T."/>
            <person name="Katoh T."/>
            <person name="Asamizu E."/>
            <person name="Sato S."/>
            <person name="Nakamura Y."/>
            <person name="Kotani H."/>
            <person name="Tabata S."/>
        </authorList>
    </citation>
    <scope>NUCLEOTIDE SEQUENCE [LARGE SCALE GENOMIC DNA]</scope>
    <source>
        <strain>cv. Columbia</strain>
    </source>
</reference>
<reference key="2">
    <citation type="journal article" date="2017" name="Plant J.">
        <title>Araport11: a complete reannotation of the Arabidopsis thaliana reference genome.</title>
        <authorList>
            <person name="Cheng C.Y."/>
            <person name="Krishnakumar V."/>
            <person name="Chan A.P."/>
            <person name="Thibaud-Nissen F."/>
            <person name="Schobel S."/>
            <person name="Town C.D."/>
        </authorList>
    </citation>
    <scope>GENOME REANNOTATION</scope>
    <source>
        <strain>cv. Columbia</strain>
    </source>
</reference>
<reference key="3">
    <citation type="journal article" date="2003" name="Science">
        <title>Empirical analysis of transcriptional activity in the Arabidopsis genome.</title>
        <authorList>
            <person name="Yamada K."/>
            <person name="Lim J."/>
            <person name="Dale J.M."/>
            <person name="Chen H."/>
            <person name="Shinn P."/>
            <person name="Palm C.J."/>
            <person name="Southwick A.M."/>
            <person name="Wu H.C."/>
            <person name="Kim C.J."/>
            <person name="Nguyen M."/>
            <person name="Pham P.K."/>
            <person name="Cheuk R.F."/>
            <person name="Karlin-Newmann G."/>
            <person name="Liu S.X."/>
            <person name="Lam B."/>
            <person name="Sakano H."/>
            <person name="Wu T."/>
            <person name="Yu G."/>
            <person name="Miranda M."/>
            <person name="Quach H.L."/>
            <person name="Tripp M."/>
            <person name="Chang C.H."/>
            <person name="Lee J.M."/>
            <person name="Toriumi M.J."/>
            <person name="Chan M.M."/>
            <person name="Tang C.C."/>
            <person name="Onodera C.S."/>
            <person name="Deng J.M."/>
            <person name="Akiyama K."/>
            <person name="Ansari Y."/>
            <person name="Arakawa T."/>
            <person name="Banh J."/>
            <person name="Banno F."/>
            <person name="Bowser L."/>
            <person name="Brooks S.Y."/>
            <person name="Carninci P."/>
            <person name="Chao Q."/>
            <person name="Choy N."/>
            <person name="Enju A."/>
            <person name="Goldsmith A.D."/>
            <person name="Gurjal M."/>
            <person name="Hansen N.F."/>
            <person name="Hayashizaki Y."/>
            <person name="Johnson-Hopson C."/>
            <person name="Hsuan V.W."/>
            <person name="Iida K."/>
            <person name="Karnes M."/>
            <person name="Khan S."/>
            <person name="Koesema E."/>
            <person name="Ishida J."/>
            <person name="Jiang P.X."/>
            <person name="Jones T."/>
            <person name="Kawai J."/>
            <person name="Kamiya A."/>
            <person name="Meyers C."/>
            <person name="Nakajima M."/>
            <person name="Narusaka M."/>
            <person name="Seki M."/>
            <person name="Sakurai T."/>
            <person name="Satou M."/>
            <person name="Tamse R."/>
            <person name="Vaysberg M."/>
            <person name="Wallender E.K."/>
            <person name="Wong C."/>
            <person name="Yamamura Y."/>
            <person name="Yuan S."/>
            <person name="Shinozaki K."/>
            <person name="Davis R.W."/>
            <person name="Theologis A."/>
            <person name="Ecker J.R."/>
        </authorList>
    </citation>
    <scope>NUCLEOTIDE SEQUENCE [LARGE SCALE MRNA]</scope>
    <source>
        <strain>cv. Columbia</strain>
    </source>
</reference>
<reference key="4">
    <citation type="journal article" date="2005" name="Plant J.">
        <title>A duplicated pair of Arabidopsis RING-finger E3 ligases contribute to the RPM1- and RPS2-mediated hypersensitive response.</title>
        <authorList>
            <person name="Kawasaki T."/>
            <person name="Nam J."/>
            <person name="Boyes D.C."/>
            <person name="Holt B.F. III"/>
            <person name="Hubert D.A."/>
            <person name="Wiig A."/>
            <person name="Dangl J.L."/>
        </authorList>
    </citation>
    <scope>FUNCTION</scope>
    <scope>SUBCELLULAR LOCATION</scope>
    <scope>INTERACTION WITH RPM1</scope>
    <scope>INDUCTION</scope>
    <scope>DISRUPTION PHENOTYPE</scope>
</reference>
<accession>Q8W4Q5</accession>
<accession>Q9FGM8</accession>
<feature type="chain" id="PRO_0000395754" description="E3 ubiquitin protein ligase RIN3">
    <location>
        <begin position="1"/>
        <end position="577"/>
    </location>
</feature>
<feature type="transmembrane region" description="Helical" evidence="1">
    <location>
        <begin position="3"/>
        <end position="23"/>
    </location>
</feature>
<feature type="transmembrane region" description="Helical" evidence="1">
    <location>
        <begin position="58"/>
        <end position="78"/>
    </location>
</feature>
<feature type="transmembrane region" description="Helical" evidence="1">
    <location>
        <begin position="120"/>
        <end position="140"/>
    </location>
</feature>
<feature type="transmembrane region" description="Helical" evidence="1">
    <location>
        <begin position="162"/>
        <end position="182"/>
    </location>
</feature>
<feature type="transmembrane region" description="Helical" evidence="1">
    <location>
        <begin position="191"/>
        <end position="211"/>
    </location>
</feature>
<feature type="transmembrane region" description="Helical" evidence="1">
    <location>
        <begin position="272"/>
        <end position="292"/>
    </location>
</feature>
<feature type="domain" description="CUE" evidence="3">
    <location>
        <begin position="537"/>
        <end position="577"/>
    </location>
</feature>
<feature type="zinc finger region" description="RING-type; atypical" evidence="2">
    <location>
        <begin position="337"/>
        <end position="379"/>
    </location>
</feature>
<feature type="sequence conflict" description="In Ref. 3; AAL32977." evidence="5" ref="3">
    <original>D</original>
    <variation>E</variation>
    <location>
        <position position="218"/>
    </location>
</feature>
<name>RIN3_ARATH</name>
<protein>
    <recommendedName>
        <fullName>E3 ubiquitin protein ligase RIN3</fullName>
        <ecNumber>2.3.2.27</ecNumber>
    </recommendedName>
    <alternativeName>
        <fullName evidence="5">RING-type E3 ubiquitin transferase RIN3</fullName>
    </alternativeName>
    <alternativeName>
        <fullName>RPM1-interacting protein 3</fullName>
    </alternativeName>
</protein>
<gene>
    <name type="primary">RIN3</name>
    <name type="ordered locus">At5g51450</name>
    <name type="ORF">MFG13.16</name>
</gene>
<evidence type="ECO:0000255" key="1"/>
<evidence type="ECO:0000255" key="2">
    <source>
        <dbReference type="PROSITE-ProRule" id="PRU00175"/>
    </source>
</evidence>
<evidence type="ECO:0000255" key="3">
    <source>
        <dbReference type="PROSITE-ProRule" id="PRU00468"/>
    </source>
</evidence>
<evidence type="ECO:0000269" key="4">
    <source>
    </source>
</evidence>
<evidence type="ECO:0000305" key="5"/>
<sequence length="577" mass="64518">MGITYLHISVATTALSFVGLQVWTELSLDRLRADGIITKNISLGNSENTLELLLSSHTTIALLASFVLNIYILLVLSLKTLFFGDLYAIETRKLVERLANYIIYKGTFLPFVVPRTVFQGVLWTIWLTVLCTLKMFQALARDRLDRLNASPSSTPWTYFRVYSALFMVLSTDLCWIKLSLMIYNTVGSSVYLLLLFEPCGIAFETLQALLIHGFQLLDMWINHLAVKNSDCQRSKFYDSMTAGSLLEWKGLLNRNLGFFLDMATLVMALGHYLHIWWLHGMAFHLVDAVLFLNIRALLSSILKRIKGYIKLRVALGALHAALLDATSEELRDYDDECAICREPMAKAKRLHCNHLFHLGCLRSWLDQGLNEVYSCPTCRKPLFVGRTESEANPSRGEVSSDEHLARQFERQNNSVHALTTGMFPTETPNFTESDPWRNSEVDPSWLQTWSDQGVDVVGSSAGSRSVGLGQVQLMMRHLASVGEGSAQTTLDDASWGLWPMNPSQASTSSTYVPPGAGGRTGGLHLRTVSRAANNMASILAMAETVREVLPHVPDEIIFQDLQRTNSVSVTVNNLLQM</sequence>